<comment type="subcellular location">
    <subcellularLocation>
        <location evidence="1">Cytoplasm</location>
    </subcellularLocation>
</comment>
<comment type="similarity">
    <text evidence="1">Belongs to the TACO1 family.</text>
</comment>
<dbReference type="EMBL" id="CP000721">
    <property type="protein sequence ID" value="ABR36332.1"/>
    <property type="molecule type" value="Genomic_DNA"/>
</dbReference>
<dbReference type="RefSeq" id="WP_012060379.1">
    <property type="nucleotide sequence ID" value="NC_009617.1"/>
</dbReference>
<dbReference type="SMR" id="A6M152"/>
<dbReference type="KEGG" id="cbe:Cbei_4222"/>
<dbReference type="eggNOG" id="COG0217">
    <property type="taxonomic scope" value="Bacteria"/>
</dbReference>
<dbReference type="HOGENOM" id="CLU_062974_2_2_9"/>
<dbReference type="Proteomes" id="UP000000565">
    <property type="component" value="Chromosome"/>
</dbReference>
<dbReference type="GO" id="GO:0005829">
    <property type="term" value="C:cytosol"/>
    <property type="evidence" value="ECO:0007669"/>
    <property type="project" value="TreeGrafter"/>
</dbReference>
<dbReference type="GO" id="GO:0003677">
    <property type="term" value="F:DNA binding"/>
    <property type="evidence" value="ECO:0007669"/>
    <property type="project" value="UniProtKB-UniRule"/>
</dbReference>
<dbReference type="GO" id="GO:0006355">
    <property type="term" value="P:regulation of DNA-templated transcription"/>
    <property type="evidence" value="ECO:0007669"/>
    <property type="project" value="UniProtKB-UniRule"/>
</dbReference>
<dbReference type="FunFam" id="1.10.10.200:FF:000002">
    <property type="entry name" value="Probable transcriptional regulatory protein CLM62_37755"/>
    <property type="match status" value="1"/>
</dbReference>
<dbReference type="FunFam" id="3.30.70.980:FF:000002">
    <property type="entry name" value="Probable transcriptional regulatory protein YebC"/>
    <property type="match status" value="1"/>
</dbReference>
<dbReference type="Gene3D" id="1.10.10.200">
    <property type="match status" value="1"/>
</dbReference>
<dbReference type="Gene3D" id="3.30.70.980">
    <property type="match status" value="2"/>
</dbReference>
<dbReference type="HAMAP" id="MF_00693">
    <property type="entry name" value="Transcrip_reg_TACO1"/>
    <property type="match status" value="1"/>
</dbReference>
<dbReference type="InterPro" id="IPR017856">
    <property type="entry name" value="Integrase-like_N"/>
</dbReference>
<dbReference type="InterPro" id="IPR048300">
    <property type="entry name" value="TACO1_YebC-like_2nd/3rd_dom"/>
</dbReference>
<dbReference type="InterPro" id="IPR049083">
    <property type="entry name" value="TACO1_YebC_N"/>
</dbReference>
<dbReference type="InterPro" id="IPR002876">
    <property type="entry name" value="Transcrip_reg_TACO1-like"/>
</dbReference>
<dbReference type="InterPro" id="IPR026564">
    <property type="entry name" value="Transcrip_reg_TACO1-like_dom3"/>
</dbReference>
<dbReference type="InterPro" id="IPR029072">
    <property type="entry name" value="YebC-like"/>
</dbReference>
<dbReference type="NCBIfam" id="NF001030">
    <property type="entry name" value="PRK00110.1"/>
    <property type="match status" value="1"/>
</dbReference>
<dbReference type="NCBIfam" id="NF009044">
    <property type="entry name" value="PRK12378.1"/>
    <property type="match status" value="1"/>
</dbReference>
<dbReference type="NCBIfam" id="TIGR01033">
    <property type="entry name" value="YebC/PmpR family DNA-binding transcriptional regulator"/>
    <property type="match status" value="1"/>
</dbReference>
<dbReference type="PANTHER" id="PTHR12532:SF6">
    <property type="entry name" value="TRANSCRIPTIONAL REGULATORY PROTEIN YEBC-RELATED"/>
    <property type="match status" value="1"/>
</dbReference>
<dbReference type="PANTHER" id="PTHR12532">
    <property type="entry name" value="TRANSLATIONAL ACTIVATOR OF CYTOCHROME C OXIDASE 1"/>
    <property type="match status" value="1"/>
</dbReference>
<dbReference type="Pfam" id="PF20772">
    <property type="entry name" value="TACO1_YebC_N"/>
    <property type="match status" value="1"/>
</dbReference>
<dbReference type="Pfam" id="PF01709">
    <property type="entry name" value="Transcrip_reg"/>
    <property type="match status" value="1"/>
</dbReference>
<dbReference type="SUPFAM" id="SSF75625">
    <property type="entry name" value="YebC-like"/>
    <property type="match status" value="1"/>
</dbReference>
<evidence type="ECO:0000255" key="1">
    <source>
        <dbReference type="HAMAP-Rule" id="MF_00693"/>
    </source>
</evidence>
<feature type="chain" id="PRO_1000083149" description="Probable transcriptional regulatory protein Cbei_4222">
    <location>
        <begin position="1"/>
        <end position="245"/>
    </location>
</feature>
<reference key="1">
    <citation type="submission" date="2007-06" db="EMBL/GenBank/DDBJ databases">
        <title>Complete sequence of Clostridium beijerinckii NCIMB 8052.</title>
        <authorList>
            <consortium name="US DOE Joint Genome Institute"/>
            <person name="Copeland A."/>
            <person name="Lucas S."/>
            <person name="Lapidus A."/>
            <person name="Barry K."/>
            <person name="Detter J.C."/>
            <person name="Glavina del Rio T."/>
            <person name="Hammon N."/>
            <person name="Israni S."/>
            <person name="Dalin E."/>
            <person name="Tice H."/>
            <person name="Pitluck S."/>
            <person name="Sims D."/>
            <person name="Brettin T."/>
            <person name="Bruce D."/>
            <person name="Tapia R."/>
            <person name="Brainard J."/>
            <person name="Schmutz J."/>
            <person name="Larimer F."/>
            <person name="Land M."/>
            <person name="Hauser L."/>
            <person name="Kyrpides N."/>
            <person name="Mikhailova N."/>
            <person name="Bennet G."/>
            <person name="Cann I."/>
            <person name="Chen J.-S."/>
            <person name="Contreras A.L."/>
            <person name="Jones D."/>
            <person name="Kashket E."/>
            <person name="Mitchell W."/>
            <person name="Stoddard S."/>
            <person name="Schwarz W."/>
            <person name="Qureshi N."/>
            <person name="Young M."/>
            <person name="Shi Z."/>
            <person name="Ezeji T."/>
            <person name="White B."/>
            <person name="Blaschek H."/>
            <person name="Richardson P."/>
        </authorList>
    </citation>
    <scope>NUCLEOTIDE SEQUENCE [LARGE SCALE GENOMIC DNA]</scope>
    <source>
        <strain>ATCC 51743 / NCIMB 8052</strain>
    </source>
</reference>
<name>Y4222_CLOB8</name>
<sequence length="245" mass="26731">MSGHSKWHNIQAKKGKTDAKRGKIFTKIGKEIVMAVKNGGANQDINAKLRDVVAKAKAANMPNDTISKAIKKASGELSSVNYENIVYEGYGPSGVAVIVETLTDNKNRSAGNVRSAFTKGGGNMGTSGCVSFMFQEKGEIVIEKEDKDEDELMMIALDAGAEDFASEEEVFVVTTAPEEFGTVREALEAQGIEFLEASVKMIPDTYTAIDEADAKKFQKMLDLLDDDDDVQEVYHNAEFPEGWDE</sequence>
<keyword id="KW-0963">Cytoplasm</keyword>
<keyword id="KW-0238">DNA-binding</keyword>
<keyword id="KW-0804">Transcription</keyword>
<keyword id="KW-0805">Transcription regulation</keyword>
<proteinExistence type="inferred from homology"/>
<organism>
    <name type="scientific">Clostridium beijerinckii (strain ATCC 51743 / NCIMB 8052)</name>
    <name type="common">Clostridium acetobutylicum</name>
    <dbReference type="NCBI Taxonomy" id="290402"/>
    <lineage>
        <taxon>Bacteria</taxon>
        <taxon>Bacillati</taxon>
        <taxon>Bacillota</taxon>
        <taxon>Clostridia</taxon>
        <taxon>Eubacteriales</taxon>
        <taxon>Clostridiaceae</taxon>
        <taxon>Clostridium</taxon>
    </lineage>
</organism>
<accession>A6M152</accession>
<gene>
    <name type="ordered locus">Cbei_4222</name>
</gene>
<protein>
    <recommendedName>
        <fullName evidence="1">Probable transcriptional regulatory protein Cbei_4222</fullName>
    </recommendedName>
</protein>